<comment type="function">
    <text evidence="1">Large tegument protein that plays multiple roles in the viral cycle. During viral entry, remains associated with the capsid while most of the tegument is detached and participates in the capsid transport toward the host nucleus. Plays a role in the routing of the capsid at the nuclear pore complex and subsequent uncoating. Within the host nucleus, acts as a deneddylase and promotes the degradation of nuclear CRLs (cullin-RING ubiquitin ligases) and thereby stabilizes nuclear CRL substrates, while cytoplasmic CRLs remain unaffected. These modifications prevent host cell cycle S-phase progression and create a favorable environment allowing efficient viral genome replication. Participates later in the secondary envelopment of capsids. Indeed, plays a linker role for the association of the outer viral tegument to the capsids together with the inner tegument protein.</text>
</comment>
<comment type="catalytic activity">
    <reaction evidence="1">
        <text>Thiol-dependent hydrolysis of ester, thioester, amide, peptide and isopeptide bonds formed by the C-terminal Gly of ubiquitin (a 76-residue protein attached to proteins as an intracellular targeting signal).</text>
        <dbReference type="EC" id="3.4.19.12"/>
    </reaction>
</comment>
<comment type="subunit">
    <text evidence="1">Interacts with host CUL1 and CUL4A; these interactions inhibit the E3 ligase activity of cullins. Interacts with inner tegument protein. Interacts with capsid vertex specific component CVC2. Interacts with the major capsid protein/MCP.</text>
</comment>
<comment type="subcellular location">
    <subcellularLocation>
        <location evidence="1">Virion tegument</location>
    </subcellularLocation>
    <subcellularLocation>
        <location evidence="1">Host cytoplasm</location>
    </subcellularLocation>
    <subcellularLocation>
        <location evidence="1">Host nucleus</location>
    </subcellularLocation>
    <text evidence="1">Tightly associated with the capsid.</text>
</comment>
<comment type="similarity">
    <text evidence="1">Belongs to the herpesviridae large tegument protein family.</text>
</comment>
<name>LTP_EHV1B</name>
<keyword id="KW-1035">Host cytoplasm</keyword>
<keyword id="KW-1048">Host nucleus</keyword>
<keyword id="KW-0945">Host-virus interaction</keyword>
<keyword id="KW-0378">Hydrolase</keyword>
<keyword id="KW-1127">Modulation of host ubiquitin pathway by viral deubiquitinase</keyword>
<keyword id="KW-1130">Modulation of host ubiquitin pathway by virus</keyword>
<keyword id="KW-0645">Protease</keyword>
<keyword id="KW-1185">Reference proteome</keyword>
<keyword id="KW-0677">Repeat</keyword>
<keyword id="KW-0788">Thiol protease</keyword>
<keyword id="KW-0833">Ubl conjugation pathway</keyword>
<keyword id="KW-0946">Virion</keyword>
<keyword id="KW-0920">Virion tegument</keyword>
<dbReference type="EC" id="3.4.19.12" evidence="1"/>
<dbReference type="EC" id="3.4.22.-" evidence="1"/>
<dbReference type="EMBL" id="AY665713">
    <property type="protein sequence ID" value="AAT67281.1"/>
    <property type="molecule type" value="Genomic_DNA"/>
</dbReference>
<dbReference type="PIR" id="G36797">
    <property type="entry name" value="WZBEB6"/>
</dbReference>
<dbReference type="SMR" id="P28955"/>
<dbReference type="KEGG" id="vg:1487490"/>
<dbReference type="Proteomes" id="UP000001189">
    <property type="component" value="Segment"/>
</dbReference>
<dbReference type="GO" id="GO:0030430">
    <property type="term" value="C:host cell cytoplasm"/>
    <property type="evidence" value="ECO:0007669"/>
    <property type="project" value="UniProtKB-SubCell"/>
</dbReference>
<dbReference type="GO" id="GO:0042025">
    <property type="term" value="C:host cell nucleus"/>
    <property type="evidence" value="ECO:0007669"/>
    <property type="project" value="UniProtKB-SubCell"/>
</dbReference>
<dbReference type="GO" id="GO:0019033">
    <property type="term" value="C:viral tegument"/>
    <property type="evidence" value="ECO:0007669"/>
    <property type="project" value="UniProtKB-SubCell"/>
</dbReference>
<dbReference type="GO" id="GO:0004843">
    <property type="term" value="F:cysteine-type deubiquitinase activity"/>
    <property type="evidence" value="ECO:0007669"/>
    <property type="project" value="UniProtKB-EC"/>
</dbReference>
<dbReference type="GO" id="GO:0019784">
    <property type="term" value="F:deNEDDylase activity"/>
    <property type="evidence" value="ECO:0007669"/>
    <property type="project" value="InterPro"/>
</dbReference>
<dbReference type="GO" id="GO:0006508">
    <property type="term" value="P:proteolysis"/>
    <property type="evidence" value="ECO:0007669"/>
    <property type="project" value="UniProtKB-KW"/>
</dbReference>
<dbReference type="GO" id="GO:0039648">
    <property type="term" value="P:symbiont-mediated perturbation of host ubiquitin-like protein modification"/>
    <property type="evidence" value="ECO:0007669"/>
    <property type="project" value="UniProtKB-KW"/>
</dbReference>
<dbReference type="GO" id="GO:0039693">
    <property type="term" value="P:viral DNA genome replication"/>
    <property type="evidence" value="ECO:0007669"/>
    <property type="project" value="InterPro"/>
</dbReference>
<dbReference type="Gene3D" id="3.90.70.120">
    <property type="match status" value="1"/>
</dbReference>
<dbReference type="HAMAP" id="MF_04044">
    <property type="entry name" value="HSV_LTP"/>
    <property type="match status" value="1"/>
</dbReference>
<dbReference type="InterPro" id="IPR005210">
    <property type="entry name" value="Herpes_LT_deneddylase"/>
</dbReference>
<dbReference type="InterPro" id="IPR006928">
    <property type="entry name" value="Herpes_teg_USP"/>
</dbReference>
<dbReference type="InterPro" id="IPR034702">
    <property type="entry name" value="HSV_LTP"/>
</dbReference>
<dbReference type="InterPro" id="IPR038765">
    <property type="entry name" value="Papain-like_cys_pep_sf"/>
</dbReference>
<dbReference type="Pfam" id="PF04843">
    <property type="entry name" value="Herpes_teg_N"/>
    <property type="match status" value="1"/>
</dbReference>
<dbReference type="Pfam" id="PF03586">
    <property type="entry name" value="Herpes_UL36"/>
    <property type="match status" value="1"/>
</dbReference>
<dbReference type="PRINTS" id="PR01217">
    <property type="entry name" value="PRICHEXTENSN"/>
</dbReference>
<dbReference type="SUPFAM" id="SSF54001">
    <property type="entry name" value="Cysteine proteinases"/>
    <property type="match status" value="1"/>
</dbReference>
<dbReference type="PROSITE" id="PS51521">
    <property type="entry name" value="HTUSP"/>
    <property type="match status" value="1"/>
</dbReference>
<gene>
    <name type="ordered locus">24</name>
</gene>
<reference key="1">
    <citation type="journal article" date="1992" name="Virology">
        <title>The DNA sequence of equine herpesvirus-1.</title>
        <authorList>
            <person name="Telford E.A.R."/>
            <person name="Watson M.S."/>
            <person name="McBride K."/>
            <person name="Davison A.J."/>
        </authorList>
    </citation>
    <scope>NUCLEOTIDE SEQUENCE [LARGE SCALE GENOMIC DNA]</scope>
</reference>
<organismHost>
    <name type="scientific">Equus caballus</name>
    <name type="common">Horse</name>
    <dbReference type="NCBI Taxonomy" id="9796"/>
</organismHost>
<proteinExistence type="inferred from homology"/>
<protein>
    <recommendedName>
        <fullName evidence="1">Large tegument protein deneddylase</fullName>
        <ecNumber evidence="1">3.4.19.12</ecNumber>
        <ecNumber evidence="1">3.4.22.-</ecNumber>
    </recommendedName>
</protein>
<organism>
    <name type="scientific">Equine herpesvirus 1 (strain Ab4p)</name>
    <name type="common">EHV-1</name>
    <name type="synonym">Equine abortion virus</name>
    <dbReference type="NCBI Taxonomy" id="31520"/>
    <lineage>
        <taxon>Viruses</taxon>
        <taxon>Duplodnaviria</taxon>
        <taxon>Heunggongvirae</taxon>
        <taxon>Peploviricota</taxon>
        <taxon>Herviviricetes</taxon>
        <taxon>Herpesvirales</taxon>
        <taxon>Orthoherpesviridae</taxon>
        <taxon>Alphaherpesvirinae</taxon>
        <taxon>Varicellovirus</taxon>
        <taxon>Varicellovirus equidalpha1</taxon>
        <taxon>Equid alphaherpesvirus 1</taxon>
    </lineage>
</organism>
<evidence type="ECO:0000255" key="1">
    <source>
        <dbReference type="HAMAP-Rule" id="MF_04044"/>
    </source>
</evidence>
<evidence type="ECO:0000256" key="2">
    <source>
        <dbReference type="SAM" id="MobiDB-lite"/>
    </source>
</evidence>
<accession>P28955</accession>
<accession>Q6DLI7</accession>
<sequence length="3421" mass="367083">MAQTLVPANKAGGAQADVVVIGYRNQYDSQLGEGSHVSCLRSSLSFLRLIFTHGIDFALTADSIDGVLVEGRAWTVAGSKSGEAPCMVSIVELPNKITYANSANALCCVFSRLYGDSGFYMHPGDGFQSTQIPARQFFDGVWKSRSESFALITIGAIGLAVYRHGDVAYVFDPHGHGSVTEAFVVRVLARDVYAYLTGYAATDPESDWAGALVFFVTCGPTESEPGFLISATSLLYGISETYLSDEQYVERSVATSHPGISTPPPLTDVAVGAVSEAWQYQELENGAATLDADMEGVAPAAAQVRASVIRQPTEKRVSLPKRRRPPWTPPTSSENLTTSGNTHTVAGRPSQKVRNATANVQNPTTGNGSAWAEALNDGGVDNASRPGQAVGAAGTLQNPAPGDALAMETTQASEEALRTRRVFRLSGEDEAPYDLGDAVGVLSAEINELATRAEELDVLSSTCVDSTVWVTRPHNSPDMDILEQFITMIFNRLLSFLVENGARTRTDSPSVIAGLFPGVLAAIPTQSAVVNLLQATGMALSDVASYKSILNMVSNEDSPVGELAVIKLELVASEVIKSTQKLVARVEELERDVTSGSVNPLGLYTYLTERLVAEMTKHGGDLFAREPKPGAVSLTERIGSLFRKARTREARATRTNASLARDLNAIEAAVHAAHDKFDAIEIKPADPSDTTNMDELAKSLDLSAVPTRVAKVIKKVESMVSDSIREYFLRGVQYSARAIAMDKTSGARFQVASAAVSNLERMLDSLPNFEKSLNSVVASAGIQGPPPAQISGSRKATLLGNLLRAGQNLTTDNALGAWAALLSEAHTEGHIERRELEAVIKEITSINDHAAKKASVEADMERFRVLSAAVDQATSDMYNSNPHALDTIIRGAEEMIRQAKVVEAHFDSGRISREAASRVGVRKREVETLANSARQRAAEISAARDEIYSRLQSLLLPLAGFVGLRAAPGVLEQLAKDAQRSTSEELRNLMHEAPKQVVSTVHSHLWSLFGQFREALEHPNSTTSSALAGVGPAFAIVVRSLLDPNKQRESVEFFITHADALADTVGAVEANPNSELAVAHAVNSIAAAIQTVSVGGRTITEFAFLVPMLERYQSRLTIVRETQRLATAQRAVAASVSAAAEVTTKLRAVAVPGVQEDVLKAAIAAAKHVSSEVTAAATAAERELARLDSKALSVAQVARAHQDLQKQTAVAKQRVGEIEEVLANLNKQQRELQDRAVHDRWKSDLLAALDKIETKSSFDVSELSRLRDLGAARGYDSREFAKRAEQALAANARAVIAVLDNVFKFNPYAPVNSKKETNPTISMLYNISWWDDFTLAAPILNTLFAGVDVEELMSLMRISTGMITFASTNGGRPKYNEAVNSLSSDMLKVPQLAKYVDFYGKWYTEFNAEMDVLSKLRADVLQAVGVRSGEISRALEEVTYVRNAEVAEKVLADGVKLYIPSDALIAKAVKYLEEFNQKRFAGSAFEEAIATTIRQDLSTAREAATQAEAARSEAMHRATHILREVVEAAKAADRDASANLANLKNLLRLTPPPQSVAAALDKATSSDDIVTQAALLLGTVESTPELDIKAVEWLQQARSIIDSHPLTTKIDGKGPMDPYAERIEKLHTLRGELDELRRQLTATEVSWDEAWGNFSRAVPRADVSMDGFVDAHQRARTLQASMGVISEMRADNKYGRLPPKVIGAIESKFAERHKNLETFNDTSTVLQTAITQFDSLVQQIPPEMEYDVLRSLLASFDQLAAVLPKWVGAEYAAYRSLLLMRIGLYDEYQKIAGIAAAGSRPHLEAVEYRSAVEDANLRRASRVSSLMGDKDVILSLREAKSSIDTAFPQVLLDAKGVPVEYRVCYRAVGDKLAAMLCGKLGVSMRPAMPSDPIVESSSVSGINVTHDILQLRFGLEKAYHSGFSTFARFVRHKRADWSPTEPAQAAAEIYAAVLATTLTREYGATWHRIRFMASSGLFVASPDSVCDTQGGRGKKSNNIVHLTLSDVVLSAMLRNSMHLVNFMRLDLTRQHEYMARTITPVLTKSLLSDILINTLVPTDTSTQWRSLPLAGDLEDLAQGMLFSIRMSDWKQNSFSTTSLLDVWMRSPGESGRAAAAKIASAIPGNPLATFTVLARMCIPPNALASLWEALQPEAFSQQNLSYDDVVTSRLDIASTVQTSVAVDPEMKSVDTKSRKQLYTTTGTSTTFTLAGSAPSAVKEVSALDVATCALMFGAPVVIAMETPEMFSEASGMSFCLKIFDSRPGATDHEIIQAVSSDLSSWGTSLLALDPNAIENACLTTQLEILSGLVASKLLAPAPPCLIVLDPSMRVIKVLWESESPPNDLVITLAEDEIIAELPYLNADDDLLPPMNPDDPIYTRVISGTNIPTATTEGSLFADQQLEFLRPESNPFPFASHDSSQSLDVPSSPSSGSDKYEEDPTGIVYDAPVDDMSDMAMNKAKAWQEWLEDGFAEDDYRELSNAMPAPPKTTPVVESKQKSDSVDRAPTLPPKAAPLPPSDASAIMSGKPVFKYTPGNKSAVPPSVPAPPTLPPAPPLPQSTSKAASGPPPTLPPAPPLPQSTSKAASGPPPTLPPAPPLPQSTSKAASGPPPTLPPAPPLPQSTSKAASGATQSDSGKTLTLDVPKTQSKDKVVPVPPTDKPSTTTPAALKQSDASKPPTAAIQHQQKLGTPVTPKDSGDKPTDNASAPVGVSPVTPDGTPGAKPPPKDAPPVDDTKQPVRKSLPSQVRGGRPYIRPSLGPFKFTGPPGYTIPVHGLPPSDSNVTQSTKEPPKPAVETPAAAPAKSAAAPAAAPAKSAAAPAAAPAKSAAAPAAAPAKSAAAPAAAPAKSAAAPAAAPAKDQTKSAAEVPKPAKDQAKDQAKDQAKDQAKDQAKDQAKSTTGQKLAKDPKSDGLTDDVALEIVPEKTPLPDDSPIGAVPENTPLPDDSPIGSPDLSASKNSHTTDAVSSDRFSVACKVPLPDSPEDDFYSYAVDVPLPDSPTDDPSSGRSDARAPTVGGVASIHRKSDSRNNRQSDAWRRAFADTLHGRPRNRSATKPCKSAPYKVPHAISYTKIPSVPNDQSGLAGKPCSEEPKRPTGRDTPVGSWNVSPSQAPADIPTAIPQNQNTSESPRTTSLKSPTRTVQSSMPADDIDELAEYDLQIARAVPVTKHPQPPPANQTPPPQEPPAPIDDRKNIRPPLSEEEIIAFLINMDDDDAGNASGPVDLHSVQAPKLPKQSKPTTNQFVPLDWWTETEPVVDADSLDLSPKQQRLFSWESTRDLLNINVRDRVYEEESDDEYTVSWDQHLVPAVSPTSVSSYSSDTVTDSYTDINDPRSVVCPLDGNAQNNVREFLDTHSSRVRVVPADELLSRRYFRSTSLSAMALLIAACRTIVRRLRATRRVLTDINRSLLLDLKQIRVLLG</sequence>
<feature type="chain" id="PRO_0000116036" description="Large tegument protein deneddylase">
    <location>
        <begin position="1"/>
        <end position="3421"/>
    </location>
</feature>
<feature type="domain" description="Peptidase C76" evidence="1">
    <location>
        <begin position="19"/>
        <end position="238"/>
    </location>
</feature>
<feature type="region of interest" description="Deubiquitination activity" evidence="1">
    <location>
        <begin position="1"/>
        <end position="248"/>
    </location>
</feature>
<feature type="region of interest" description="Disordered" evidence="2">
    <location>
        <begin position="311"/>
        <end position="351"/>
    </location>
</feature>
<feature type="region of interest" description="Interaction with inner tegument protein" evidence="1">
    <location>
        <begin position="482"/>
        <end position="508"/>
    </location>
</feature>
<feature type="region of interest" description="Disordered" evidence="2">
    <location>
        <begin position="2407"/>
        <end position="2442"/>
    </location>
</feature>
<feature type="region of interest" description="Disordered" evidence="2">
    <location>
        <begin position="2479"/>
        <end position="3195"/>
    </location>
</feature>
<feature type="compositionally biased region" description="Polar residues" evidence="2">
    <location>
        <begin position="332"/>
        <end position="344"/>
    </location>
</feature>
<feature type="compositionally biased region" description="Low complexity" evidence="2">
    <location>
        <begin position="2415"/>
        <end position="2432"/>
    </location>
</feature>
<feature type="compositionally biased region" description="Pro residues" evidence="2">
    <location>
        <begin position="2506"/>
        <end position="2516"/>
    </location>
</feature>
<feature type="compositionally biased region" description="Pro residues" evidence="2">
    <location>
        <begin position="2541"/>
        <end position="2556"/>
    </location>
</feature>
<feature type="compositionally biased region" description="Pro residues" evidence="2">
    <location>
        <begin position="2565"/>
        <end position="2577"/>
    </location>
</feature>
<feature type="compositionally biased region" description="Pro residues" evidence="2">
    <location>
        <begin position="2586"/>
        <end position="2598"/>
    </location>
</feature>
<feature type="compositionally biased region" description="Pro residues" evidence="2">
    <location>
        <begin position="2607"/>
        <end position="2619"/>
    </location>
</feature>
<feature type="compositionally biased region" description="Polar residues" evidence="2">
    <location>
        <begin position="2620"/>
        <end position="2637"/>
    </location>
</feature>
<feature type="compositionally biased region" description="Polar residues" evidence="2">
    <location>
        <begin position="2778"/>
        <end position="2787"/>
    </location>
</feature>
<feature type="compositionally biased region" description="Low complexity" evidence="2">
    <location>
        <begin position="2797"/>
        <end position="2857"/>
    </location>
</feature>
<feature type="compositionally biased region" description="Basic and acidic residues" evidence="2">
    <location>
        <begin position="2869"/>
        <end position="2895"/>
    </location>
</feature>
<feature type="compositionally biased region" description="Polar residues" evidence="2">
    <location>
        <begin position="2953"/>
        <end position="2969"/>
    </location>
</feature>
<feature type="compositionally biased region" description="Basic and acidic residues" evidence="2">
    <location>
        <begin position="3023"/>
        <end position="3040"/>
    </location>
</feature>
<feature type="compositionally biased region" description="Basic and acidic residues" evidence="2">
    <location>
        <begin position="3088"/>
        <end position="3097"/>
    </location>
</feature>
<feature type="compositionally biased region" description="Polar residues" evidence="2">
    <location>
        <begin position="3120"/>
        <end position="3146"/>
    </location>
</feature>
<feature type="compositionally biased region" description="Pro residues" evidence="2">
    <location>
        <begin position="3171"/>
        <end position="3188"/>
    </location>
</feature>
<feature type="active site" evidence="1">
    <location>
        <position position="39"/>
    </location>
</feature>
<feature type="active site" evidence="1">
    <location>
        <position position="172"/>
    </location>
</feature>
<feature type="active site" evidence="1">
    <location>
        <position position="174"/>
    </location>
</feature>
<feature type="site" description="Important for catalytic activity" evidence="1">
    <location>
        <position position="26"/>
    </location>
</feature>